<evidence type="ECO:0000255" key="1">
    <source>
        <dbReference type="HAMAP-Rule" id="MF_01416"/>
    </source>
</evidence>
<accession>P22479</accession>
<accession>D3G0F6</accession>
<gene>
    <name evidence="1" type="primary">atpH</name>
    <name type="ordered locus">BpOF4_06865</name>
</gene>
<keyword id="KW-0066">ATP synthesis</keyword>
<keyword id="KW-1003">Cell membrane</keyword>
<keyword id="KW-0139">CF(1)</keyword>
<keyword id="KW-0375">Hydrogen ion transport</keyword>
<keyword id="KW-0406">Ion transport</keyword>
<keyword id="KW-0472">Membrane</keyword>
<keyword id="KW-1185">Reference proteome</keyword>
<keyword id="KW-0813">Transport</keyword>
<name>ATPD_ALKPO</name>
<reference key="1">
    <citation type="journal article" date="1991" name="Mol. Gen. Genet.">
        <title>Organization and nucleotide sequence of the atp genes encoding the ATP synthase from alkaliphilic Bacillus firmus OF4.</title>
        <authorList>
            <person name="Ivey D.M."/>
            <person name="Krulwich T.A."/>
        </authorList>
    </citation>
    <scope>NUCLEOTIDE SEQUENCE [GENOMIC DNA]</scope>
</reference>
<reference key="2">
    <citation type="submission" date="2000-12" db="EMBL/GenBank/DDBJ databases">
        <authorList>
            <person name="Hicks D."/>
            <person name="Krulwich T.A."/>
        </authorList>
    </citation>
    <scope>SEQUENCE REVISION</scope>
</reference>
<reference key="3">
    <citation type="journal article" date="2011" name="Environ. Microbiol.">
        <title>Genome of alkaliphilic Bacillus pseudofirmus OF4 reveals adaptations that support the ability to grow in an external pH range from 7.5 to 11.4.</title>
        <authorList>
            <person name="Janto B."/>
            <person name="Ahmed A."/>
            <person name="Ito M."/>
            <person name="Liu J."/>
            <person name="Hicks D.B."/>
            <person name="Pagni S."/>
            <person name="Fackelmayer O.J."/>
            <person name="Smith T.A."/>
            <person name="Earl J."/>
            <person name="Elbourne L.D."/>
            <person name="Hassan K."/>
            <person name="Paulsen I.T."/>
            <person name="Kolsto A.B."/>
            <person name="Tourasse N.J."/>
            <person name="Ehrlich G.D."/>
            <person name="Boissy R."/>
            <person name="Ivey D.M."/>
            <person name="Li G."/>
            <person name="Xue Y."/>
            <person name="Ma Y."/>
            <person name="Hu F.Z."/>
            <person name="Krulwich T.A."/>
        </authorList>
    </citation>
    <scope>NUCLEOTIDE SEQUENCE [LARGE SCALE GENOMIC DNA]</scope>
    <source>
        <strain>ATCC BAA-2126 / JCM 17055 / OF4</strain>
    </source>
</reference>
<organism>
    <name type="scientific">Alkalihalophilus pseudofirmus (strain ATCC BAA-2126 / JCM 17055 / OF4)</name>
    <name type="common">Bacillus pseudofirmus</name>
    <dbReference type="NCBI Taxonomy" id="398511"/>
    <lineage>
        <taxon>Bacteria</taxon>
        <taxon>Bacillati</taxon>
        <taxon>Bacillota</taxon>
        <taxon>Bacilli</taxon>
        <taxon>Bacillales</taxon>
        <taxon>Bacillaceae</taxon>
        <taxon>Alkalihalophilus</taxon>
    </lineage>
</organism>
<comment type="function">
    <text evidence="1">F(1)F(0) ATP synthase produces ATP from ADP in the presence of a proton or sodium gradient. F-type ATPases consist of two structural domains, F(1) containing the extramembraneous catalytic core and F(0) containing the membrane proton channel, linked together by a central stalk and a peripheral stalk. During catalysis, ATP synthesis in the catalytic domain of F(1) is coupled via a rotary mechanism of the central stalk subunits to proton translocation.</text>
</comment>
<comment type="function">
    <text evidence="1">This protein is part of the stalk that links CF(0) to CF(1). It either transmits conformational changes from CF(0) to CF(1) or is implicated in proton conduction.</text>
</comment>
<comment type="subunit">
    <text evidence="1">F-type ATPases have 2 components, F(1) - the catalytic core - and F(0) - the membrane proton channel. F(1) has five subunits: alpha(3), beta(3), gamma(1), delta(1), epsilon(1). F(0) has three main subunits: a(1), b(2) and c(10-14). The alpha and beta chains form an alternating ring which encloses part of the gamma chain. F(1) is attached to F(0) by a central stalk formed by the gamma and epsilon chains, while a peripheral stalk is formed by the delta and b chains.</text>
</comment>
<comment type="subcellular location">
    <subcellularLocation>
        <location evidence="1">Cell membrane</location>
        <topology evidence="1">Peripheral membrane protein</topology>
    </subcellularLocation>
</comment>
<comment type="similarity">
    <text evidence="1">Belongs to the ATPase delta chain family.</text>
</comment>
<sequence length="182" mass="20536">MSNQAVANRYAYALFQLAEEKSILSQVVQEMELVKEVVNTTPEFLQLLSHPKVTTEKKRAFIENSFKDSLSETSLHTLLLLVENKRIESLVDMIDSFKEMSYEAQDMAEAVVYSAKPLTSEEQAQIAVIFAKKVNKAKLLVTNVVNKDLLGGLKIRIGDRIYDGSVKSQLDRLERQLIAGTR</sequence>
<feature type="chain" id="PRO_0000193453" description="ATP synthase subunit delta">
    <location>
        <begin position="1"/>
        <end position="182"/>
    </location>
</feature>
<protein>
    <recommendedName>
        <fullName evidence="1">ATP synthase subunit delta</fullName>
    </recommendedName>
    <alternativeName>
        <fullName evidence="1">ATP synthase F(1) sector subunit delta</fullName>
    </alternativeName>
    <alternativeName>
        <fullName evidence="1">F-type ATPase subunit delta</fullName>
        <shortName evidence="1">F-ATPase subunit delta</shortName>
    </alternativeName>
</protein>
<dbReference type="EMBL" id="AF330160">
    <property type="protein sequence ID" value="AAG48360.1"/>
    <property type="molecule type" value="Genomic_DNA"/>
</dbReference>
<dbReference type="EMBL" id="CP001878">
    <property type="protein sequence ID" value="ADC49431.1"/>
    <property type="molecule type" value="Genomic_DNA"/>
</dbReference>
<dbReference type="RefSeq" id="WP_012960704.1">
    <property type="nucleotide sequence ID" value="NC_013791.2"/>
</dbReference>
<dbReference type="SMR" id="P22479"/>
<dbReference type="STRING" id="398511.BpOF4_06865"/>
<dbReference type="KEGG" id="bpf:BpOF4_06865"/>
<dbReference type="eggNOG" id="COG0712">
    <property type="taxonomic scope" value="Bacteria"/>
</dbReference>
<dbReference type="HOGENOM" id="CLU_085114_4_1_9"/>
<dbReference type="Proteomes" id="UP000001544">
    <property type="component" value="Chromosome"/>
</dbReference>
<dbReference type="GO" id="GO:0005886">
    <property type="term" value="C:plasma membrane"/>
    <property type="evidence" value="ECO:0007669"/>
    <property type="project" value="UniProtKB-SubCell"/>
</dbReference>
<dbReference type="GO" id="GO:0045259">
    <property type="term" value="C:proton-transporting ATP synthase complex"/>
    <property type="evidence" value="ECO:0007669"/>
    <property type="project" value="UniProtKB-KW"/>
</dbReference>
<dbReference type="GO" id="GO:0046933">
    <property type="term" value="F:proton-transporting ATP synthase activity, rotational mechanism"/>
    <property type="evidence" value="ECO:0007669"/>
    <property type="project" value="UniProtKB-UniRule"/>
</dbReference>
<dbReference type="Gene3D" id="1.10.520.20">
    <property type="entry name" value="N-terminal domain of the delta subunit of the F1F0-ATP synthase"/>
    <property type="match status" value="1"/>
</dbReference>
<dbReference type="HAMAP" id="MF_01416">
    <property type="entry name" value="ATP_synth_delta_bact"/>
    <property type="match status" value="1"/>
</dbReference>
<dbReference type="InterPro" id="IPR026015">
    <property type="entry name" value="ATP_synth_OSCP/delta_N_sf"/>
</dbReference>
<dbReference type="InterPro" id="IPR020781">
    <property type="entry name" value="ATPase_OSCP/d_CS"/>
</dbReference>
<dbReference type="InterPro" id="IPR000711">
    <property type="entry name" value="ATPase_OSCP/dsu"/>
</dbReference>
<dbReference type="NCBIfam" id="TIGR01145">
    <property type="entry name" value="ATP_synt_delta"/>
    <property type="match status" value="1"/>
</dbReference>
<dbReference type="NCBIfam" id="NF004403">
    <property type="entry name" value="PRK05758.2-4"/>
    <property type="match status" value="1"/>
</dbReference>
<dbReference type="PANTHER" id="PTHR11910">
    <property type="entry name" value="ATP SYNTHASE DELTA CHAIN"/>
    <property type="match status" value="1"/>
</dbReference>
<dbReference type="Pfam" id="PF00213">
    <property type="entry name" value="OSCP"/>
    <property type="match status" value="1"/>
</dbReference>
<dbReference type="PRINTS" id="PR00125">
    <property type="entry name" value="ATPASEDELTA"/>
</dbReference>
<dbReference type="SUPFAM" id="SSF47928">
    <property type="entry name" value="N-terminal domain of the delta subunit of the F1F0-ATP synthase"/>
    <property type="match status" value="1"/>
</dbReference>
<dbReference type="PROSITE" id="PS00389">
    <property type="entry name" value="ATPASE_DELTA"/>
    <property type="match status" value="1"/>
</dbReference>
<proteinExistence type="inferred from homology"/>